<proteinExistence type="evidence at protein level"/>
<feature type="signal peptide" evidence="7 9">
    <location>
        <begin position="1"/>
        <end position="30"/>
    </location>
</feature>
<feature type="chain" id="PRO_0000064564" description="Mannose-specific lectin" evidence="7">
    <location>
        <begin position="31"/>
        <end position="181"/>
    </location>
</feature>
<feature type="domain" description="Bulb-type lectin" evidence="3">
    <location>
        <begin position="31"/>
        <end position="140"/>
    </location>
</feature>
<feature type="binding site" evidence="1">
    <location>
        <position position="56"/>
    </location>
    <ligand>
        <name>alpha-D-mannopyranose</name>
        <dbReference type="ChEBI" id="CHEBI:28729"/>
    </ligand>
</feature>
<feature type="binding site" evidence="1">
    <location>
        <position position="58"/>
    </location>
    <ligand>
        <name>alpha-D-mannopyranose</name>
        <dbReference type="ChEBI" id="CHEBI:28729"/>
    </ligand>
</feature>
<feature type="binding site" evidence="1">
    <location>
        <position position="60"/>
    </location>
    <ligand>
        <name>alpha-D-mannopyranose</name>
        <dbReference type="ChEBI" id="CHEBI:28729"/>
    </ligand>
</feature>
<feature type="binding site" evidence="1">
    <location>
        <position position="64"/>
    </location>
    <ligand>
        <name>alpha-D-mannopyranose</name>
        <dbReference type="ChEBI" id="CHEBI:28729"/>
    </ligand>
</feature>
<feature type="binding site" evidence="1">
    <location>
        <position position="71"/>
    </location>
    <ligand>
        <name>alpha-D-mannopyranose</name>
        <dbReference type="ChEBI" id="CHEBI:28729"/>
    </ligand>
</feature>
<feature type="binding site" evidence="1">
    <location>
        <position position="72"/>
    </location>
    <ligand>
        <name>alpha-D-mannopyranose</name>
        <dbReference type="ChEBI" id="CHEBI:28729"/>
    </ligand>
</feature>
<feature type="binding site" evidence="1">
    <location>
        <position position="74"/>
    </location>
    <ligand>
        <name>alpha-D-mannopyranose</name>
        <dbReference type="ChEBI" id="CHEBI:28729"/>
    </ligand>
</feature>
<feature type="binding site" evidence="1">
    <location>
        <position position="88"/>
    </location>
    <ligand>
        <name>alpha-D-mannopyranose</name>
        <dbReference type="ChEBI" id="CHEBI:28729"/>
    </ligand>
</feature>
<feature type="binding site" evidence="1">
    <location>
        <position position="90"/>
    </location>
    <ligand>
        <name>alpha-D-mannopyranose</name>
        <dbReference type="ChEBI" id="CHEBI:28729"/>
    </ligand>
</feature>
<feature type="binding site" evidence="1">
    <location>
        <position position="92"/>
    </location>
    <ligand>
        <name>alpha-D-mannopyranose</name>
        <dbReference type="ChEBI" id="CHEBI:28729"/>
    </ligand>
</feature>
<feature type="binding site" evidence="1">
    <location>
        <position position="96"/>
    </location>
    <ligand>
        <name>alpha-D-mannopyranose</name>
        <dbReference type="ChEBI" id="CHEBI:28729"/>
    </ligand>
</feature>
<feature type="binding site" evidence="1">
    <location>
        <position position="103"/>
    </location>
    <ligand>
        <name>alpha-D-mannopyranose</name>
        <dbReference type="ChEBI" id="CHEBI:28729"/>
    </ligand>
</feature>
<feature type="binding site" evidence="1">
    <location>
        <position position="104"/>
    </location>
    <ligand>
        <name>alpha-D-mannopyranose</name>
        <dbReference type="ChEBI" id="CHEBI:28729"/>
    </ligand>
</feature>
<feature type="binding site" evidence="1">
    <location>
        <position position="107"/>
    </location>
    <ligand>
        <name>alpha-D-mannopyranose</name>
        <dbReference type="ChEBI" id="CHEBI:28729"/>
    </ligand>
</feature>
<feature type="binding site" evidence="1">
    <location>
        <position position="114"/>
    </location>
    <ligand>
        <name>alpha-D-mannopyranose</name>
        <dbReference type="ChEBI" id="CHEBI:28729"/>
    </ligand>
</feature>
<feature type="binding site" evidence="1">
    <location>
        <position position="120"/>
    </location>
    <ligand>
        <name>alpha-D-mannopyranose</name>
        <dbReference type="ChEBI" id="CHEBI:28729"/>
    </ligand>
</feature>
<feature type="binding site" evidence="1">
    <location>
        <position position="122"/>
    </location>
    <ligand>
        <name>alpha-D-mannopyranose</name>
        <dbReference type="ChEBI" id="CHEBI:28729"/>
    </ligand>
</feature>
<feature type="binding site" evidence="1">
    <location>
        <position position="124"/>
    </location>
    <ligand>
        <name>alpha-D-mannopyranose</name>
        <dbReference type="ChEBI" id="CHEBI:28729"/>
    </ligand>
</feature>
<feature type="binding site" evidence="1">
    <location>
        <position position="128"/>
    </location>
    <ligand>
        <name>alpha-D-mannopyranose</name>
        <dbReference type="ChEBI" id="CHEBI:28729"/>
    </ligand>
</feature>
<feature type="binding site" evidence="1">
    <location>
        <position position="133"/>
    </location>
    <ligand>
        <name>alpha-D-mannopyranose</name>
        <dbReference type="ChEBI" id="CHEBI:28729"/>
    </ligand>
</feature>
<feature type="disulfide bond" evidence="2 3">
    <location>
        <begin position="59"/>
        <end position="83"/>
    </location>
</feature>
<feature type="splice variant" id="VSP_030211" description="In isoform 2." evidence="11">
    <original>YRRSVGGAVVM</original>
    <variation>LLEHRVPTSFY</variation>
    <location>
        <begin position="138"/>
        <end position="148"/>
    </location>
</feature>
<feature type="splice variant" id="VSP_030212" description="In isoform 2." evidence="11">
    <location>
        <begin position="149"/>
        <end position="181"/>
    </location>
</feature>
<feature type="sequence conflict" description="In Ref. 2; ABF70332." evidence="12" ref="2">
    <original>R</original>
    <variation>P</variation>
    <location>
        <position position="3"/>
    </location>
</feature>
<feature type="sequence conflict" description="In Ref. 5; AA sequence." evidence="12" ref="5">
    <original>NVL</original>
    <variation>MIP</variation>
    <location>
        <begin position="32"/>
        <end position="34"/>
    </location>
</feature>
<feature type="sequence conflict" description="In Ref. 1; AAB64237, 3; AAW48531 and 4; AAR23523." evidence="12" ref="1 3 4">
    <original>V</original>
    <variation>L</variation>
    <location>
        <position position="33"/>
    </location>
</feature>
<feature type="sequence conflict" description="In Ref. 1; AA sequence." evidence="12" ref="1">
    <original>D</original>
    <variation>N</variation>
    <location>
        <position position="47"/>
    </location>
</feature>
<feature type="sequence conflict" description="In Ref. 5; AA sequence." evidence="12" ref="5">
    <original>QDDC</original>
    <variation>RPDD</variation>
    <location>
        <begin position="56"/>
        <end position="59"/>
    </location>
</feature>
<feature type="sequence conflict" description="In Ref. 6; AA sequence." evidence="12" ref="6">
    <original>V</original>
    <variation>R</variation>
    <location>
        <position position="98"/>
    </location>
</feature>
<feature type="sequence conflict" description="In Ref. 4; AAR23523." evidence="12" ref="4">
    <original>N</original>
    <variation>S</variation>
    <location>
        <position position="114"/>
    </location>
</feature>
<feature type="sequence conflict" description="In Ref. 1; AAB64237 and 4; AAR23523." evidence="12" ref="1 4">
    <original>V</original>
    <variation>L</variation>
    <location>
        <position position="118"/>
    </location>
</feature>
<feature type="sequence conflict" description="In Ref. 1; AAB64237 and 4; AAR23523." evidence="12" ref="1 4">
    <original>K</original>
    <variation>E</variation>
    <location>
        <position position="121"/>
    </location>
</feature>
<feature type="sequence conflict" description="In Ref. 2; ABF70332." evidence="12" ref="2">
    <original>NV</original>
    <variation>KD</variation>
    <location>
        <begin position="168"/>
        <end position="169"/>
    </location>
</feature>
<feature type="sequence conflict" description="In Ref. 1; AAB64237." evidence="12" ref="1">
    <original>T</original>
    <variation>S</variation>
    <location>
        <position position="178"/>
    </location>
</feature>
<evidence type="ECO:0000250" key="1">
    <source>
        <dbReference type="UniProtKB" id="C0HM45"/>
    </source>
</evidence>
<evidence type="ECO:0000250" key="2">
    <source>
        <dbReference type="UniProtKB" id="P49329"/>
    </source>
</evidence>
<evidence type="ECO:0000255" key="3">
    <source>
        <dbReference type="PROSITE-ProRule" id="PRU00038"/>
    </source>
</evidence>
<evidence type="ECO:0000269" key="4">
    <source>
    </source>
</evidence>
<evidence type="ECO:0000269" key="5">
    <source>
    </source>
</evidence>
<evidence type="ECO:0000269" key="6">
    <source>
    </source>
</evidence>
<evidence type="ECO:0000269" key="7">
    <source>
    </source>
</evidence>
<evidence type="ECO:0000269" key="8">
    <source ref="3"/>
</evidence>
<evidence type="ECO:0000269" key="9">
    <source ref="5"/>
</evidence>
<evidence type="ECO:0000303" key="10">
    <source>
    </source>
</evidence>
<evidence type="ECO:0000303" key="11">
    <source ref="3"/>
</evidence>
<evidence type="ECO:0000305" key="12"/>
<evidence type="ECO:0000312" key="13">
    <source>
        <dbReference type="EMBL" id="AAB64237.1"/>
    </source>
</evidence>
<evidence type="ECO:0000312" key="14">
    <source>
        <dbReference type="EMBL" id="AAR23523.1"/>
    </source>
</evidence>
<evidence type="ECO:0000312" key="15">
    <source>
        <dbReference type="EMBL" id="AAW48531.1"/>
    </source>
</evidence>
<evidence type="ECO:0000312" key="16">
    <source>
        <dbReference type="EMBL" id="ABF70332.1"/>
    </source>
</evidence>
<reference evidence="12 13" key="1">
    <citation type="journal article" date="1997" name="Plant Mol. Biol.">
        <title>Isolation, characterization and molecular cloning of the mannose-binding lectins from leaves and roots of garlic (Allium sativum L.).</title>
        <authorList>
            <person name="Smeets K."/>
            <person name="Van Damme E.J.M."/>
            <person name="Verhaert P."/>
            <person name="Barre A."/>
            <person name="Rouge P."/>
            <person name="Van Leuven F."/>
            <person name="Peumans W.J."/>
        </authorList>
    </citation>
    <scope>NUCLEOTIDE SEQUENCE [MRNA] (ISOFORM 1)</scope>
    <scope>PROTEIN SEQUENCE OF 31-49; 56-70 AND 88-102</scope>
    <scope>FUNCTION</scope>
    <scope>SUBUNIT</scope>
    <scope>MASS SPECTROMETRY</scope>
    <source>
        <tissue evidence="7">Leaf</tissue>
        <tissue evidence="13">Root</tissue>
    </source>
</reference>
<reference evidence="12 16" key="2">
    <citation type="submission" date="2006-05" db="EMBL/GenBank/DDBJ databases">
        <title>Insecticidal activity of garlic (Allium sativum) lectin.</title>
        <authorList>
            <person name="Khareedu V.R."/>
            <person name="Mendu V."/>
            <person name="Vudem D.R."/>
        </authorList>
    </citation>
    <scope>NUCLEOTIDE SEQUENCE [MRNA] (ISOFORM 1)</scope>
    <source>
        <tissue evidence="16">Leaf</tissue>
    </source>
</reference>
<reference evidence="12 15" key="3">
    <citation type="journal article" date="2005" name="Plant Sci.">
        <title>Constitutive and phloem specific expression of Allium sativum leaf agglutinin (ASAL) to engineer aphid (Lipaphis erysimi) resistance in transgenic Indian mustard (Brassica juncea).</title>
        <authorList>
            <person name="Dutta I."/>
            <person name="Majumder P."/>
            <person name="Saha P."/>
            <person name="Ray K."/>
            <person name="Das S."/>
        </authorList>
        <dbReference type="AGRICOLA" id="IND43762706"/>
    </citation>
    <scope>NUCLEOTIDE SEQUENCE [MRNA] OF 29-181 (ISOFORM 2)</scope>
    <source>
        <tissue evidence="15">Leaf</tissue>
    </source>
</reference>
<reference evidence="12 16" key="4">
    <citation type="submission" date="2003-08" db="EMBL/GenBank/DDBJ databases">
        <title>Mannose-binding lectin of onion is a potential biopesticide against plant sap-sucking insects.</title>
        <authorList>
            <person name="Hossain M.A."/>
            <person name="Maiti M.K."/>
            <person name="Basu A."/>
            <person name="Sen S.K."/>
        </authorList>
    </citation>
    <scope>NUCLEOTIDE SEQUENCE [MRNA] OF 31-148 (ISOFORM 1)</scope>
    <source>
        <tissue evidence="14">Leaf</tissue>
    </source>
</reference>
<reference evidence="12 16" key="5">
    <citation type="submission" date="2004-04" db="UniProtKB">
        <title>Allimin.</title>
        <authorList>
            <person name="Chakraborty K."/>
            <person name="Girish G.V."/>
            <person name="Mohapatra S."/>
            <person name="Kahn N.N."/>
            <person name="Sinha K.A."/>
        </authorList>
    </citation>
    <scope>PROTEIN SEQUENCE OF 31-65</scope>
</reference>
<reference evidence="12" key="6">
    <citation type="journal article" date="2008" name="Transgenic Res.">
        <title>Ectopically expressed leaf and bulb lectins from garlic (Allium sativum L.) protect transgenic tobacco plants against cotton leafworm (Spodoptera littoralis).</title>
        <authorList>
            <person name="Sadeghi A."/>
            <person name="Smagghe G."/>
            <person name="Broeders S."/>
            <person name="Hernalsteens J.-P."/>
            <person name="De Greve H."/>
            <person name="Peumans W.J."/>
            <person name="Van Damme E.J.M."/>
        </authorList>
    </citation>
    <scope>PROTEIN SEQUENCE OF 47-56; 90-99 AND 125-141 (ISOFORM 1)</scope>
    <scope>FUNCTION</scope>
</reference>
<reference evidence="12" key="7">
    <citation type="journal article" date="2005" name="Plant Biotechnol. J.">
        <title>The efficacy of a novel insecticidal protein, Allium sativum leaf lectin (ASAL), against homopteran insects monitored in transgenic tobacco.</title>
        <authorList>
            <person name="Dutta I."/>
            <person name="Saha P."/>
            <person name="Majumder P."/>
            <person name="Sarkar A."/>
            <person name="Chakraborti D."/>
            <person name="Banerjee S."/>
            <person name="Das S."/>
        </authorList>
    </citation>
    <scope>FUNCTION</scope>
    <source>
        <tissue evidence="4">Leaf</tissue>
    </source>
</reference>
<reference key="8">
    <citation type="journal article" date="2022" name="Virus Res.">
        <title>A novel plant lectin, NTL-125, interferes with SARS-CoV-2 interaction with hACE2.</title>
        <authorList>
            <person name="Sarkar A."/>
            <person name="Paul S."/>
            <person name="Singh C."/>
            <person name="Chowdhury N."/>
            <person name="Nag P."/>
            <person name="Das S."/>
            <person name="Kumar S."/>
            <person name="Sharma A."/>
            <person name="Das D.K."/>
            <person name="Dutta D."/>
            <person name="Thakur K.G."/>
            <person name="Bagchi A."/>
            <person name="Shriti S."/>
            <person name="Das K.P."/>
            <person name="Ringe R.P."/>
            <person name="Das S."/>
        </authorList>
    </citation>
    <scope>IDENTIFICATION BY MASS SPECTROMETRY</scope>
    <scope>FUNCTION</scope>
    <source>
        <tissue evidence="6">Leaf</tissue>
    </source>
</reference>
<sequence>MGRTTSSPKAMMRIATVAAILTILASTCMARNVLTNGEGLYAGQSLDVEQYKFIMQDDCNLVLYEYSTPIWASNTGVTGKNGCRAVMQRDGNFVVYDVNGRPVWASNSVRGNGNYILVLQKDRNVVIYGSDIWSTGTYRRSVGGAVVMAMNGTVDGGSVIGPVVVNQNVTAAIRKVGTGAA</sequence>
<protein>
    <recommendedName>
        <fullName>Mannose-specific lectin</fullName>
    </recommendedName>
    <alternativeName>
        <fullName>ASAL</fullName>
    </alternativeName>
    <alternativeName>
        <fullName>ASARI</fullName>
    </alternativeName>
    <alternativeName>
        <fullName>Allimin</fullName>
    </alternativeName>
    <alternativeName>
        <fullName>Leaf agglutinin</fullName>
    </alternativeName>
    <alternativeName>
        <fullName>Root agglutinin</fullName>
    </alternativeName>
</protein>
<keyword id="KW-0025">Alternative splicing</keyword>
<keyword id="KW-0930">Antiviral protein</keyword>
<keyword id="KW-0903">Direct protein sequencing</keyword>
<keyword id="KW-1015">Disulfide bond</keyword>
<keyword id="KW-0430">Lectin</keyword>
<keyword id="KW-0465">Mannose-binding</keyword>
<keyword id="KW-0611">Plant defense</keyword>
<keyword id="KW-0964">Secreted</keyword>
<keyword id="KW-0732">Signal</keyword>
<organism>
    <name type="scientific">Allium sativum</name>
    <name type="common">Garlic</name>
    <dbReference type="NCBI Taxonomy" id="4682"/>
    <lineage>
        <taxon>Eukaryota</taxon>
        <taxon>Viridiplantae</taxon>
        <taxon>Streptophyta</taxon>
        <taxon>Embryophyta</taxon>
        <taxon>Tracheophyta</taxon>
        <taxon>Spermatophyta</taxon>
        <taxon>Magnoliopsida</taxon>
        <taxon>Liliopsida</taxon>
        <taxon>Asparagales</taxon>
        <taxon>Amaryllidaceae</taxon>
        <taxon>Allioideae</taxon>
        <taxon>Allieae</taxon>
        <taxon>Allium</taxon>
    </lineage>
</organism>
<comment type="function">
    <text evidence="4 5 6 7">Mannose-specific lectin (PubMed:17265166, PubMed:9037141). Shows agglutinating activity towards rabbit erythrocytes (PubMed:35398454, PubMed:9037141). However, it does not show agglutinating activity towards human erythrocytes (PubMed:9037141). Has insecticidal activity against the cotton leafworm S.littoralis and the peach potato aphid M.persicae (PubMed:17147631, PubMed:17265166). Also displays antiviral activity and therefore may contribute to defense against infections (PubMed:35398454).</text>
</comment>
<comment type="subunit">
    <text evidence="7">Homodimer.</text>
</comment>
<comment type="subcellular location">
    <subcellularLocation>
        <location evidence="2">Secreted</location>
    </subcellularLocation>
</comment>
<comment type="alternative products">
    <event type="alternative splicing"/>
    <isoform>
        <id>P83886-1</id>
        <name evidence="7">1</name>
        <sequence type="displayed"/>
    </isoform>
    <isoform>
        <id>P83886-2</id>
        <name evidence="8">2</name>
        <sequence type="described" ref="VSP_030211 VSP_030212"/>
    </isoform>
</comment>
<comment type="mass spectrometry">
    <text>Leaf agglutinin.</text>
</comment>
<comment type="mass spectrometry">
    <text>Root agglutinin.</text>
</comment>
<comment type="mass spectrometry">
    <text>Leaf agglutinin.</text>
</comment>
<comment type="miscellaneous">
    <text evidence="6">Has an inhibitory effect on SARS-CoV-2 in Vero E6 cells (IC(50)=4 ug/ml) (PubMed:35398454). Viral replication is inhibited by 80% at a concentration of 20 ug/ml, and 50% inhibition is observed at concentrations of 5 ug/ml and 10 ug/ml (PubMed:35398454).</text>
</comment>
<comment type="sequence caution" evidence="12">
    <conflict type="erroneous initiation">
        <sequence resource="EMBL-CDS" id="AAW48531"/>
    </conflict>
</comment>
<accession>P83886</accession>
<accession>P92930</accession>
<accession>P92931</accession>
<accession>Q19K88</accession>
<accession>Q5I1X6</accession>
<accession>Q679P1</accession>
<gene>
    <name evidence="10" type="primary">LECASAL</name>
    <name evidence="10" type="synonym">LECASARI</name>
</gene>
<name>ASAL_ALLSA</name>
<dbReference type="EMBL" id="U58947">
    <property type="protein sequence ID" value="AAB64237.1"/>
    <property type="molecule type" value="mRNA"/>
</dbReference>
<dbReference type="EMBL" id="U58948">
    <property type="protein sequence ID" value="AAB64238.1"/>
    <property type="molecule type" value="mRNA"/>
</dbReference>
<dbReference type="EMBL" id="DQ525625">
    <property type="protein sequence ID" value="ABF70332.1"/>
    <property type="molecule type" value="mRNA"/>
</dbReference>
<dbReference type="EMBL" id="AY866499">
    <property type="protein sequence ID" value="AAW48531.1"/>
    <property type="status" value="ALT_INIT"/>
    <property type="molecule type" value="mRNA"/>
</dbReference>
<dbReference type="EMBL" id="AY376827">
    <property type="protein sequence ID" value="AAR23523.1"/>
    <property type="molecule type" value="mRNA"/>
</dbReference>
<dbReference type="SMR" id="P83886"/>
<dbReference type="IntAct" id="P83886">
    <property type="interactions" value="4"/>
</dbReference>
<dbReference type="GO" id="GO:0005576">
    <property type="term" value="C:extracellular region"/>
    <property type="evidence" value="ECO:0007669"/>
    <property type="project" value="UniProtKB-SubCell"/>
</dbReference>
<dbReference type="GO" id="GO:0005537">
    <property type="term" value="F:D-mannose binding"/>
    <property type="evidence" value="ECO:0000315"/>
    <property type="project" value="AgBase"/>
</dbReference>
<dbReference type="GO" id="GO:0042803">
    <property type="term" value="F:protein homodimerization activity"/>
    <property type="evidence" value="ECO:0000314"/>
    <property type="project" value="AgBase"/>
</dbReference>
<dbReference type="GO" id="GO:0098609">
    <property type="term" value="P:cell-cell adhesion"/>
    <property type="evidence" value="ECO:0000314"/>
    <property type="project" value="AgBase"/>
</dbReference>
<dbReference type="GO" id="GO:0002213">
    <property type="term" value="P:defense response to insect"/>
    <property type="evidence" value="ECO:0000304"/>
    <property type="project" value="AgBase"/>
</dbReference>
<dbReference type="GO" id="GO:0051607">
    <property type="term" value="P:defense response to virus"/>
    <property type="evidence" value="ECO:0000314"/>
    <property type="project" value="UniProtKB"/>
</dbReference>
<dbReference type="GO" id="GO:0050688">
    <property type="term" value="P:regulation of defense response to virus"/>
    <property type="evidence" value="ECO:0007669"/>
    <property type="project" value="UniProtKB-KW"/>
</dbReference>
<dbReference type="CDD" id="cd00028">
    <property type="entry name" value="B_lectin"/>
    <property type="match status" value="1"/>
</dbReference>
<dbReference type="FunFam" id="2.90.10.10:FF:000040">
    <property type="entry name" value="Mannose-binding lectin"/>
    <property type="match status" value="1"/>
</dbReference>
<dbReference type="Gene3D" id="2.90.10.10">
    <property type="entry name" value="Bulb-type lectin domain"/>
    <property type="match status" value="1"/>
</dbReference>
<dbReference type="InterPro" id="IPR001480">
    <property type="entry name" value="Bulb-type_lectin_dom"/>
</dbReference>
<dbReference type="InterPro" id="IPR036426">
    <property type="entry name" value="Bulb-type_lectin_dom_sf"/>
</dbReference>
<dbReference type="SMART" id="SM00108">
    <property type="entry name" value="B_lectin"/>
    <property type="match status" value="1"/>
</dbReference>
<dbReference type="SUPFAM" id="SSF51110">
    <property type="entry name" value="alpha-D-mannose-specific plant lectins"/>
    <property type="match status" value="1"/>
</dbReference>
<dbReference type="PROSITE" id="PS50927">
    <property type="entry name" value="BULB_LECTIN"/>
    <property type="match status" value="1"/>
</dbReference>